<organism>
    <name type="scientific">Thermomicrobium roseum (strain ATCC 27502 / DSM 5159 / P-2)</name>
    <dbReference type="NCBI Taxonomy" id="309801"/>
    <lineage>
        <taxon>Bacteria</taxon>
        <taxon>Pseudomonadati</taxon>
        <taxon>Thermomicrobiota</taxon>
        <taxon>Thermomicrobia</taxon>
        <taxon>Thermomicrobiales</taxon>
        <taxon>Thermomicrobiaceae</taxon>
        <taxon>Thermomicrobium</taxon>
    </lineage>
</organism>
<comment type="function">
    <text evidence="1">The RecF protein is involved in DNA metabolism; it is required for DNA replication and normal SOS inducibility. RecF binds preferentially to single-stranded, linear DNA. It also seems to bind ATP.</text>
</comment>
<comment type="subcellular location">
    <subcellularLocation>
        <location evidence="1">Cytoplasm</location>
    </subcellularLocation>
</comment>
<comment type="similarity">
    <text evidence="1">Belongs to the RecF family.</text>
</comment>
<accession>B9KZ04</accession>
<proteinExistence type="inferred from homology"/>
<dbReference type="EMBL" id="CP001275">
    <property type="protein sequence ID" value="ACM04759.1"/>
    <property type="molecule type" value="Genomic_DNA"/>
</dbReference>
<dbReference type="RefSeq" id="WP_012642104.1">
    <property type="nucleotide sequence ID" value="NC_011959.1"/>
</dbReference>
<dbReference type="SMR" id="B9KZ04"/>
<dbReference type="STRING" id="309801.trd_0713"/>
<dbReference type="KEGG" id="tro:trd_0713"/>
<dbReference type="eggNOG" id="COG1195">
    <property type="taxonomic scope" value="Bacteria"/>
</dbReference>
<dbReference type="HOGENOM" id="CLU_040267_0_1_0"/>
<dbReference type="OrthoDB" id="9803889at2"/>
<dbReference type="Proteomes" id="UP000000447">
    <property type="component" value="Chromosome"/>
</dbReference>
<dbReference type="GO" id="GO:0005737">
    <property type="term" value="C:cytoplasm"/>
    <property type="evidence" value="ECO:0007669"/>
    <property type="project" value="UniProtKB-SubCell"/>
</dbReference>
<dbReference type="GO" id="GO:0005524">
    <property type="term" value="F:ATP binding"/>
    <property type="evidence" value="ECO:0007669"/>
    <property type="project" value="UniProtKB-UniRule"/>
</dbReference>
<dbReference type="GO" id="GO:0003697">
    <property type="term" value="F:single-stranded DNA binding"/>
    <property type="evidence" value="ECO:0007669"/>
    <property type="project" value="UniProtKB-UniRule"/>
</dbReference>
<dbReference type="GO" id="GO:0006260">
    <property type="term" value="P:DNA replication"/>
    <property type="evidence" value="ECO:0007669"/>
    <property type="project" value="UniProtKB-UniRule"/>
</dbReference>
<dbReference type="GO" id="GO:0000731">
    <property type="term" value="P:DNA synthesis involved in DNA repair"/>
    <property type="evidence" value="ECO:0007669"/>
    <property type="project" value="TreeGrafter"/>
</dbReference>
<dbReference type="GO" id="GO:0006302">
    <property type="term" value="P:double-strand break repair"/>
    <property type="evidence" value="ECO:0007669"/>
    <property type="project" value="TreeGrafter"/>
</dbReference>
<dbReference type="GO" id="GO:0009432">
    <property type="term" value="P:SOS response"/>
    <property type="evidence" value="ECO:0007669"/>
    <property type="project" value="UniProtKB-UniRule"/>
</dbReference>
<dbReference type="Gene3D" id="3.40.50.300">
    <property type="entry name" value="P-loop containing nucleotide triphosphate hydrolases"/>
    <property type="match status" value="1"/>
</dbReference>
<dbReference type="Gene3D" id="1.20.1050.90">
    <property type="entry name" value="RecF/RecN/SMC, N-terminal domain"/>
    <property type="match status" value="1"/>
</dbReference>
<dbReference type="HAMAP" id="MF_00365">
    <property type="entry name" value="RecF"/>
    <property type="match status" value="1"/>
</dbReference>
<dbReference type="InterPro" id="IPR001238">
    <property type="entry name" value="DNA-binding_RecF"/>
</dbReference>
<dbReference type="InterPro" id="IPR018078">
    <property type="entry name" value="DNA-binding_RecF_CS"/>
</dbReference>
<dbReference type="InterPro" id="IPR027417">
    <property type="entry name" value="P-loop_NTPase"/>
</dbReference>
<dbReference type="InterPro" id="IPR003395">
    <property type="entry name" value="RecF/RecN/SMC_N"/>
</dbReference>
<dbReference type="InterPro" id="IPR042174">
    <property type="entry name" value="RecF_2"/>
</dbReference>
<dbReference type="NCBIfam" id="TIGR00611">
    <property type="entry name" value="recf"/>
    <property type="match status" value="1"/>
</dbReference>
<dbReference type="PANTHER" id="PTHR32182">
    <property type="entry name" value="DNA REPLICATION AND REPAIR PROTEIN RECF"/>
    <property type="match status" value="1"/>
</dbReference>
<dbReference type="PANTHER" id="PTHR32182:SF0">
    <property type="entry name" value="DNA REPLICATION AND REPAIR PROTEIN RECF"/>
    <property type="match status" value="1"/>
</dbReference>
<dbReference type="Pfam" id="PF02463">
    <property type="entry name" value="SMC_N"/>
    <property type="match status" value="1"/>
</dbReference>
<dbReference type="SUPFAM" id="SSF52540">
    <property type="entry name" value="P-loop containing nucleoside triphosphate hydrolases"/>
    <property type="match status" value="1"/>
</dbReference>
<dbReference type="PROSITE" id="PS00617">
    <property type="entry name" value="RECF_1"/>
    <property type="match status" value="1"/>
</dbReference>
<feature type="chain" id="PRO_1000133707" description="DNA replication and repair protein RecF">
    <location>
        <begin position="1"/>
        <end position="396"/>
    </location>
</feature>
<feature type="binding site" evidence="1">
    <location>
        <begin position="30"/>
        <end position="37"/>
    </location>
    <ligand>
        <name>ATP</name>
        <dbReference type="ChEBI" id="CHEBI:30616"/>
    </ligand>
</feature>
<sequence length="396" mass="44609">MLVRSLELEEFRCFRHLHLVLPDRGLRLVGANGSGKTSLIEALYMLATTKSFRASLERHLVHRSSGSELGIPPYARLAAELFTETERSTLEIVLMVDPASGTVRKLYRRDGRSLRAVEFVGTLRVVLFSPEDLELVTGSPQQRRRYLDTILSTIDRAYLRALARYTRILEHRNSLLKSLAERDQRAADEQLAYWDEQLVTYGAYLLVARLRFLAEWGPRLRDHFQALDTQAQVLTTAYLPSIDLPESLLSELAAREVADAQLIVGARYRETLERLRPDELRRGSTLVGPHRDDVEFLLGEEPLTAFGSRGVQRLAVIAAKLAEIAVIHRVTDDWPVLLLDDALSELDQQHRAHLLATLSALPAQLILTATESDVLETPVLSSLPLFRLNDGRLEPG</sequence>
<name>RECF_THERP</name>
<reference key="1">
    <citation type="journal article" date="2009" name="PLoS ONE">
        <title>Complete genome sequence of the aerobic CO-oxidizing thermophile Thermomicrobium roseum.</title>
        <authorList>
            <person name="Wu D."/>
            <person name="Raymond J."/>
            <person name="Wu M."/>
            <person name="Chatterji S."/>
            <person name="Ren Q."/>
            <person name="Graham J.E."/>
            <person name="Bryant D.A."/>
            <person name="Robb F."/>
            <person name="Colman A."/>
            <person name="Tallon L.J."/>
            <person name="Badger J.H."/>
            <person name="Madupu R."/>
            <person name="Ward N.L."/>
            <person name="Eisen J.A."/>
        </authorList>
    </citation>
    <scope>NUCLEOTIDE SEQUENCE [LARGE SCALE GENOMIC DNA]</scope>
    <source>
        <strain>ATCC 27502 / DSM 5159 / P-2</strain>
    </source>
</reference>
<gene>
    <name evidence="1" type="primary">recF</name>
    <name type="ordered locus">trd_0713</name>
</gene>
<protein>
    <recommendedName>
        <fullName evidence="1">DNA replication and repair protein RecF</fullName>
    </recommendedName>
</protein>
<evidence type="ECO:0000255" key="1">
    <source>
        <dbReference type="HAMAP-Rule" id="MF_00365"/>
    </source>
</evidence>
<keyword id="KW-0067">ATP-binding</keyword>
<keyword id="KW-0963">Cytoplasm</keyword>
<keyword id="KW-0227">DNA damage</keyword>
<keyword id="KW-0234">DNA repair</keyword>
<keyword id="KW-0235">DNA replication</keyword>
<keyword id="KW-0238">DNA-binding</keyword>
<keyword id="KW-0547">Nucleotide-binding</keyword>
<keyword id="KW-1185">Reference proteome</keyword>
<keyword id="KW-0742">SOS response</keyword>